<comment type="function">
    <text evidence="2">Catalyzes the NADPH-dependent reduction of scyllo-inosose (SIS) to scyllo-inositol (SI) in vitro, but is unable to dehydrogenate scyllo-inositol and myo-inositol. Is less efficient than the functional paralog IolW. Under physiological conditions, may primarily function as an NADPH-dependent oxidoreductase that reduces carbonyl group(s) in its substrates. Cannot use NADH instead of NADPH.</text>
</comment>
<comment type="catalytic activity">
    <reaction evidence="2">
        <text>scyllo-inositol + NADP(+) = scyllo-inosose + NADPH + H(+)</text>
        <dbReference type="Rhea" id="RHEA:39063"/>
        <dbReference type="ChEBI" id="CHEBI:10642"/>
        <dbReference type="ChEBI" id="CHEBI:15378"/>
        <dbReference type="ChEBI" id="CHEBI:17811"/>
        <dbReference type="ChEBI" id="CHEBI:57783"/>
        <dbReference type="ChEBI" id="CHEBI:58349"/>
        <dbReference type="EC" id="1.1.1.371"/>
    </reaction>
</comment>
<comment type="induction">
    <text evidence="1">Is not induced in the presence of scyllo-inositol or myo-inositol.</text>
</comment>
<comment type="similarity">
    <text evidence="4">Belongs to the Gfo/Idh/MocA family.</text>
</comment>
<evidence type="ECO:0000269" key="1">
    <source>
    </source>
</evidence>
<evidence type="ECO:0000269" key="2">
    <source>
    </source>
</evidence>
<evidence type="ECO:0000303" key="3">
    <source>
    </source>
</evidence>
<evidence type="ECO:0000305" key="4"/>
<evidence type="ECO:0000312" key="5">
    <source>
        <dbReference type="EMBL" id="CAB15095.1"/>
    </source>
</evidence>
<accession>O05265</accession>
<feature type="chain" id="PRO_0000091785" description="scyllo-inositol 2-dehydrogenase (NADP(+)) IolU">
    <location>
        <begin position="1"/>
        <end position="328"/>
    </location>
</feature>
<gene>
    <name evidence="3" type="primary">iolU</name>
    <name evidence="5" type="synonym">yulF</name>
    <name type="ordered locus">BSU31170</name>
</gene>
<protein>
    <recommendedName>
        <fullName evidence="3">scyllo-inositol 2-dehydrogenase (NADP(+)) IolU</fullName>
        <ecNumber evidence="2">1.1.1.371</ecNumber>
    </recommendedName>
    <alternativeName>
        <fullName evidence="3">NADP(+)-dependent scyllo-inositol dehydrogenase 2</fullName>
        <shortName evidence="3">NADP(+)-dependent SI dehydrogenase 2</shortName>
    </alternativeName>
</protein>
<reference key="1">
    <citation type="journal article" date="1997" name="Microbiology">
        <title>Analysis of the Bacillus subtilis genome: cloning and nucleotide sequence of a 62 kb region between 275 degrees (rrnB) and 284 degrees (pai).</title>
        <authorList>
            <person name="Oudega B."/>
            <person name="Koningstein G."/>
            <person name="Rodrigues L."/>
            <person name="de Sales Ramon M."/>
            <person name="Hilbert H."/>
            <person name="Duesterhoeft A."/>
            <person name="Pohl T.M."/>
            <person name="Weitzenegger T."/>
        </authorList>
    </citation>
    <scope>NUCLEOTIDE SEQUENCE [GENOMIC DNA]</scope>
    <source>
        <strain>168</strain>
    </source>
</reference>
<reference key="2">
    <citation type="journal article" date="1997" name="Nature">
        <title>The complete genome sequence of the Gram-positive bacterium Bacillus subtilis.</title>
        <authorList>
            <person name="Kunst F."/>
            <person name="Ogasawara N."/>
            <person name="Moszer I."/>
            <person name="Albertini A.M."/>
            <person name="Alloni G."/>
            <person name="Azevedo V."/>
            <person name="Bertero M.G."/>
            <person name="Bessieres P."/>
            <person name="Bolotin A."/>
            <person name="Borchert S."/>
            <person name="Borriss R."/>
            <person name="Boursier L."/>
            <person name="Brans A."/>
            <person name="Braun M."/>
            <person name="Brignell S.C."/>
            <person name="Bron S."/>
            <person name="Brouillet S."/>
            <person name="Bruschi C.V."/>
            <person name="Caldwell B."/>
            <person name="Capuano V."/>
            <person name="Carter N.M."/>
            <person name="Choi S.-K."/>
            <person name="Codani J.-J."/>
            <person name="Connerton I.F."/>
            <person name="Cummings N.J."/>
            <person name="Daniel R.A."/>
            <person name="Denizot F."/>
            <person name="Devine K.M."/>
            <person name="Duesterhoeft A."/>
            <person name="Ehrlich S.D."/>
            <person name="Emmerson P.T."/>
            <person name="Entian K.-D."/>
            <person name="Errington J."/>
            <person name="Fabret C."/>
            <person name="Ferrari E."/>
            <person name="Foulger D."/>
            <person name="Fritz C."/>
            <person name="Fujita M."/>
            <person name="Fujita Y."/>
            <person name="Fuma S."/>
            <person name="Galizzi A."/>
            <person name="Galleron N."/>
            <person name="Ghim S.-Y."/>
            <person name="Glaser P."/>
            <person name="Goffeau A."/>
            <person name="Golightly E.J."/>
            <person name="Grandi G."/>
            <person name="Guiseppi G."/>
            <person name="Guy B.J."/>
            <person name="Haga K."/>
            <person name="Haiech J."/>
            <person name="Harwood C.R."/>
            <person name="Henaut A."/>
            <person name="Hilbert H."/>
            <person name="Holsappel S."/>
            <person name="Hosono S."/>
            <person name="Hullo M.-F."/>
            <person name="Itaya M."/>
            <person name="Jones L.-M."/>
            <person name="Joris B."/>
            <person name="Karamata D."/>
            <person name="Kasahara Y."/>
            <person name="Klaerr-Blanchard M."/>
            <person name="Klein C."/>
            <person name="Kobayashi Y."/>
            <person name="Koetter P."/>
            <person name="Koningstein G."/>
            <person name="Krogh S."/>
            <person name="Kumano M."/>
            <person name="Kurita K."/>
            <person name="Lapidus A."/>
            <person name="Lardinois S."/>
            <person name="Lauber J."/>
            <person name="Lazarevic V."/>
            <person name="Lee S.-M."/>
            <person name="Levine A."/>
            <person name="Liu H."/>
            <person name="Masuda S."/>
            <person name="Mauel C."/>
            <person name="Medigue C."/>
            <person name="Medina N."/>
            <person name="Mellado R.P."/>
            <person name="Mizuno M."/>
            <person name="Moestl D."/>
            <person name="Nakai S."/>
            <person name="Noback M."/>
            <person name="Noone D."/>
            <person name="O'Reilly M."/>
            <person name="Ogawa K."/>
            <person name="Ogiwara A."/>
            <person name="Oudega B."/>
            <person name="Park S.-H."/>
            <person name="Parro V."/>
            <person name="Pohl T.M."/>
            <person name="Portetelle D."/>
            <person name="Porwollik S."/>
            <person name="Prescott A.M."/>
            <person name="Presecan E."/>
            <person name="Pujic P."/>
            <person name="Purnelle B."/>
            <person name="Rapoport G."/>
            <person name="Rey M."/>
            <person name="Reynolds S."/>
            <person name="Rieger M."/>
            <person name="Rivolta C."/>
            <person name="Rocha E."/>
            <person name="Roche B."/>
            <person name="Rose M."/>
            <person name="Sadaie Y."/>
            <person name="Sato T."/>
            <person name="Scanlan E."/>
            <person name="Schleich S."/>
            <person name="Schroeter R."/>
            <person name="Scoffone F."/>
            <person name="Sekiguchi J."/>
            <person name="Sekowska A."/>
            <person name="Seror S.J."/>
            <person name="Serror P."/>
            <person name="Shin B.-S."/>
            <person name="Soldo B."/>
            <person name="Sorokin A."/>
            <person name="Tacconi E."/>
            <person name="Takagi T."/>
            <person name="Takahashi H."/>
            <person name="Takemaru K."/>
            <person name="Takeuchi M."/>
            <person name="Tamakoshi A."/>
            <person name="Tanaka T."/>
            <person name="Terpstra P."/>
            <person name="Tognoni A."/>
            <person name="Tosato V."/>
            <person name="Uchiyama S."/>
            <person name="Vandenbol M."/>
            <person name="Vannier F."/>
            <person name="Vassarotti A."/>
            <person name="Viari A."/>
            <person name="Wambutt R."/>
            <person name="Wedler E."/>
            <person name="Wedler H."/>
            <person name="Weitzenegger T."/>
            <person name="Winters P."/>
            <person name="Wipat A."/>
            <person name="Yamamoto H."/>
            <person name="Yamane K."/>
            <person name="Yasumoto K."/>
            <person name="Yata K."/>
            <person name="Yoshida K."/>
            <person name="Yoshikawa H.-F."/>
            <person name="Zumstein E."/>
            <person name="Yoshikawa H."/>
            <person name="Danchin A."/>
        </authorList>
    </citation>
    <scope>NUCLEOTIDE SEQUENCE [LARGE SCALE GENOMIC DNA]</scope>
    <source>
        <strain>168</strain>
    </source>
</reference>
<reference key="3">
    <citation type="journal article" date="2010" name="Microbiology">
        <title>Identification of two scyllo-inositol dehydrogenases in Bacillus subtilis.</title>
        <authorList>
            <person name="Morinaga T."/>
            <person name="Ashida H."/>
            <person name="Yoshida K."/>
        </authorList>
    </citation>
    <scope>INDUCTION</scope>
    <source>
        <strain>168 / 60015</strain>
    </source>
</reference>
<reference key="4">
    <citation type="journal article" date="2017" name="Biosci. Biotechnol. Biochem.">
        <title>Bacillus subtilis iolU encodes an additional NADP(+)-dependent scyllo-inositol dehydrogenase.</title>
        <authorList>
            <person name="Kang D.M."/>
            <person name="Tanaka K."/>
            <person name="Takenaka S."/>
            <person name="Ishikawa S."/>
            <person name="Yoshida K.I."/>
        </authorList>
    </citation>
    <scope>FUNCTION</scope>
    <scope>CATALYTIC ACTIVITY</scope>
    <scope>SUBSTRATE SPECIFICITY</scope>
    <source>
        <strain>168</strain>
    </source>
</reference>
<organism>
    <name type="scientific">Bacillus subtilis (strain 168)</name>
    <dbReference type="NCBI Taxonomy" id="224308"/>
    <lineage>
        <taxon>Bacteria</taxon>
        <taxon>Bacillati</taxon>
        <taxon>Bacillota</taxon>
        <taxon>Bacilli</taxon>
        <taxon>Bacillales</taxon>
        <taxon>Bacillaceae</taxon>
        <taxon>Bacillus</taxon>
    </lineage>
</organism>
<proteinExistence type="evidence at protein level"/>
<sequence>MIRFAIIGTNWITDRFLESAADIEDFQLTAVYSRSAERAGEFAAKHNAAHAFSDLQEMAASDCFDAVYIASPNALHKEQAVLFMNHGKHVLCEKPFASNTKETEEMISAAKANGVVLMEAMKTTFLPNFKELKKHLHKIGTVRRFTASYCQYSSRYDAFRSGTVLNAFQPELSNGSLMDIGVYCIYPAVVLFGAPKDVKANGYALSSGVDGEGTVILSYDGFEAVLMHSKISTSYAPAEIQGEDGTIVIDTIHRPERVEIRYRDGRLENIAIPDPKPAMFYEAEEFVTLIKENKLESEENTFERSLTTAKIMEEARKQMGIVYPADQA</sequence>
<name>IOLU_BACSU</name>
<dbReference type="EC" id="1.1.1.371" evidence="2"/>
<dbReference type="EMBL" id="Z93938">
    <property type="protein sequence ID" value="CAB07947.1"/>
    <property type="molecule type" value="Genomic_DNA"/>
</dbReference>
<dbReference type="EMBL" id="AL009126">
    <property type="protein sequence ID" value="CAB15095.1"/>
    <property type="molecule type" value="Genomic_DNA"/>
</dbReference>
<dbReference type="PIR" id="H70014">
    <property type="entry name" value="H70014"/>
</dbReference>
<dbReference type="RefSeq" id="NP_390995.1">
    <property type="nucleotide sequence ID" value="NC_000964.3"/>
</dbReference>
<dbReference type="RefSeq" id="WP_003228926.1">
    <property type="nucleotide sequence ID" value="NZ_OZ025638.1"/>
</dbReference>
<dbReference type="SMR" id="O05265"/>
<dbReference type="FunCoup" id="O05265">
    <property type="interactions" value="311"/>
</dbReference>
<dbReference type="STRING" id="224308.BSU31170"/>
<dbReference type="jPOST" id="O05265"/>
<dbReference type="PaxDb" id="224308-BSU31170"/>
<dbReference type="EnsemblBacteria" id="CAB15095">
    <property type="protein sequence ID" value="CAB15095"/>
    <property type="gene ID" value="BSU_31170"/>
</dbReference>
<dbReference type="GeneID" id="937153"/>
<dbReference type="KEGG" id="bsu:BSU31170"/>
<dbReference type="PATRIC" id="fig|224308.179.peg.3377"/>
<dbReference type="eggNOG" id="COG0673">
    <property type="taxonomic scope" value="Bacteria"/>
</dbReference>
<dbReference type="InParanoid" id="O05265"/>
<dbReference type="OrthoDB" id="9815825at2"/>
<dbReference type="PhylomeDB" id="O05265"/>
<dbReference type="BioCyc" id="BSUB:BSU31170-MONOMER"/>
<dbReference type="BRENDA" id="1.1.1.371">
    <property type="organism ID" value="658"/>
</dbReference>
<dbReference type="Proteomes" id="UP000001570">
    <property type="component" value="Chromosome"/>
</dbReference>
<dbReference type="GO" id="GO:0000166">
    <property type="term" value="F:nucleotide binding"/>
    <property type="evidence" value="ECO:0007669"/>
    <property type="project" value="InterPro"/>
</dbReference>
<dbReference type="GO" id="GO:0102497">
    <property type="term" value="F:scyllo-inositol dehydrogenase (NADP+) activity"/>
    <property type="evidence" value="ECO:0000314"/>
    <property type="project" value="UniProtKB"/>
</dbReference>
<dbReference type="Gene3D" id="3.30.360.10">
    <property type="entry name" value="Dihydrodipicolinate Reductase, domain 2"/>
    <property type="match status" value="1"/>
</dbReference>
<dbReference type="Gene3D" id="3.40.50.720">
    <property type="entry name" value="NAD(P)-binding Rossmann-like Domain"/>
    <property type="match status" value="1"/>
</dbReference>
<dbReference type="InterPro" id="IPR000683">
    <property type="entry name" value="Gfo/Idh/MocA-like_OxRdtase_N"/>
</dbReference>
<dbReference type="InterPro" id="IPR055170">
    <property type="entry name" value="GFO_IDH_MocA-like_dom"/>
</dbReference>
<dbReference type="InterPro" id="IPR036291">
    <property type="entry name" value="NAD(P)-bd_dom_sf"/>
</dbReference>
<dbReference type="PANTHER" id="PTHR43054">
    <property type="match status" value="1"/>
</dbReference>
<dbReference type="PANTHER" id="PTHR43054:SF1">
    <property type="entry name" value="SCYLLO-INOSITOL 2-DEHYDROGENASE (NADP(+)) IOLU"/>
    <property type="match status" value="1"/>
</dbReference>
<dbReference type="Pfam" id="PF01408">
    <property type="entry name" value="GFO_IDH_MocA"/>
    <property type="match status" value="1"/>
</dbReference>
<dbReference type="Pfam" id="PF22725">
    <property type="entry name" value="GFO_IDH_MocA_C3"/>
    <property type="match status" value="1"/>
</dbReference>
<dbReference type="SUPFAM" id="SSF55347">
    <property type="entry name" value="Glyceraldehyde-3-phosphate dehydrogenase-like, C-terminal domain"/>
    <property type="match status" value="1"/>
</dbReference>
<dbReference type="SUPFAM" id="SSF51735">
    <property type="entry name" value="NAD(P)-binding Rossmann-fold domains"/>
    <property type="match status" value="1"/>
</dbReference>
<keyword id="KW-0521">NADP</keyword>
<keyword id="KW-0560">Oxidoreductase</keyword>
<keyword id="KW-1185">Reference proteome</keyword>